<gene>
    <name type="primary">yscO</name>
    <name type="ordered locus">pYV0068</name>
</gene>
<feature type="chain" id="PRO_0000180937" description="Yop proteins translocation protein O">
    <location>
        <begin position="1"/>
        <end position="154"/>
    </location>
</feature>
<feature type="region of interest" description="Disordered" evidence="1">
    <location>
        <begin position="132"/>
        <end position="154"/>
    </location>
</feature>
<feature type="sequence conflict" description="In Ref. 1; AAA27675." evidence="2" ref="1">
    <original>ERL</original>
    <variation>DRF</variation>
    <location>
        <begin position="102"/>
        <end position="104"/>
    </location>
</feature>
<accession>P40294</accession>
<accession>Q663J8</accession>
<comment type="function">
    <text>Component of the yop secretion machinery.</text>
</comment>
<comment type="interaction">
    <interactant intactId="EBI-8554807">
        <id>P40294</id>
    </interactant>
    <interactant intactId="EBI-8554793">
        <id>O85239</id>
        <label>yopO</label>
    </interactant>
    <organismsDiffer>true</organismsDiffer>
    <experiments>4</experiments>
</comment>
<comment type="similarity">
    <text evidence="2">Belongs to the SpaM family.</text>
</comment>
<organism>
    <name type="scientific">Yersinia pseudotuberculosis serotype I (strain IP32953)</name>
    <dbReference type="NCBI Taxonomy" id="273123"/>
    <lineage>
        <taxon>Bacteria</taxon>
        <taxon>Pseudomonadati</taxon>
        <taxon>Pseudomonadota</taxon>
        <taxon>Gammaproteobacteria</taxon>
        <taxon>Enterobacterales</taxon>
        <taxon>Yersiniaceae</taxon>
        <taxon>Yersinia</taxon>
    </lineage>
</organism>
<proteinExistence type="evidence at protein level"/>
<dbReference type="EMBL" id="L25667">
    <property type="protein sequence ID" value="AAA27675.1"/>
    <property type="molecule type" value="Genomic_DNA"/>
</dbReference>
<dbReference type="EMBL" id="BX936399">
    <property type="protein sequence ID" value="CAF25411.1"/>
    <property type="molecule type" value="Genomic_DNA"/>
</dbReference>
<dbReference type="PIR" id="A55586">
    <property type="entry name" value="A55586"/>
</dbReference>
<dbReference type="RefSeq" id="WP_002212952.1">
    <property type="nucleotide sequence ID" value="NZ_CP009711.1"/>
</dbReference>
<dbReference type="SMR" id="P40294"/>
<dbReference type="IntAct" id="P40294">
    <property type="interactions" value="1"/>
</dbReference>
<dbReference type="MINT" id="P40294"/>
<dbReference type="KEGG" id="ypo:BZ17_4266"/>
<dbReference type="KEGG" id="yps:pYV0068"/>
<dbReference type="PATRIC" id="fig|273123.14.peg.4502"/>
<dbReference type="Proteomes" id="UP000001011">
    <property type="component" value="Plasmid pYV"/>
</dbReference>
<dbReference type="Gene3D" id="1.10.287.1700">
    <property type="match status" value="1"/>
</dbReference>
<dbReference type="InterPro" id="IPR053716">
    <property type="entry name" value="Flag_assembly_chemotaxis_eff"/>
</dbReference>
<dbReference type="InterPro" id="IPR009929">
    <property type="entry name" value="T3SS_YscO"/>
</dbReference>
<dbReference type="Pfam" id="PF07321">
    <property type="entry name" value="YscO"/>
    <property type="match status" value="1"/>
</dbReference>
<geneLocation type="plasmid">
    <name>pIB1</name>
</geneLocation>
<geneLocation type="plasmid">
    <name>pYV</name>
</geneLocation>
<evidence type="ECO:0000256" key="1">
    <source>
        <dbReference type="SAM" id="MobiDB-lite"/>
    </source>
</evidence>
<evidence type="ECO:0000305" key="2"/>
<sequence>MIRRLHRVKVLRVERAEKAIKTQQACLQAAHRRHQEAVQTSQDYHLWRIDEEQRLFDQRKNTTLNCKDLEKWQRQIASLREKEANYELECAKLLERLANERERLTLCQKMLQQARHKENKFLELVRREDEDELNQQHYQEEQEQEEFLQHHRNA</sequence>
<protein>
    <recommendedName>
        <fullName>Yop proteins translocation protein O</fullName>
    </recommendedName>
</protein>
<name>YSCO_YERPS</name>
<keyword id="KW-0614">Plasmid</keyword>
<keyword id="KW-0843">Virulence</keyword>
<reference key="1">
    <citation type="journal article" date="1994" name="J. Bacteriol.">
        <title>The lcrB (yscN/U) gene cluster of Yersinia pseudotuberculosis is involved in Yop secretion and shows high homology to the spa gene clusters of Shigella flexneri and Salmonella typhimurium.</title>
        <authorList>
            <person name="Bergman T."/>
            <person name="Erickson K."/>
            <person name="Galyov E."/>
            <person name="Persson C."/>
            <person name="Wolf-Watz H."/>
        </authorList>
    </citation>
    <scope>NUCLEOTIDE SEQUENCE [GENOMIC DNA]</scope>
    <source>
        <strain>YPIII / Serotype O:3</strain>
        <plasmid>pIB1</plasmid>
    </source>
</reference>
<reference key="2">
    <citation type="journal article" date="2004" name="Proc. Natl. Acad. Sci. U.S.A.">
        <title>Insights into the evolution of Yersinia pestis through whole-genome comparison with Yersinia pseudotuberculosis.</title>
        <authorList>
            <person name="Chain P.S.G."/>
            <person name="Carniel E."/>
            <person name="Larimer F.W."/>
            <person name="Lamerdin J."/>
            <person name="Stoutland P.O."/>
            <person name="Regala W.M."/>
            <person name="Georgescu A.M."/>
            <person name="Vergez L.M."/>
            <person name="Land M.L."/>
            <person name="Motin V.L."/>
            <person name="Brubaker R.R."/>
            <person name="Fowler J."/>
            <person name="Hinnebusch J."/>
            <person name="Marceau M."/>
            <person name="Medigue C."/>
            <person name="Simonet M."/>
            <person name="Chenal-Francisque V."/>
            <person name="Souza B."/>
            <person name="Dacheux D."/>
            <person name="Elliott J.M."/>
            <person name="Derbise A."/>
            <person name="Hauser L.J."/>
            <person name="Garcia E."/>
        </authorList>
    </citation>
    <scope>NUCLEOTIDE SEQUENCE [LARGE SCALE GENOMIC DNA]</scope>
    <source>
        <strain>IP32953</strain>
        <plasmid>pYV</plasmid>
    </source>
</reference>